<feature type="chain" id="PRO_0000096944" description="Nodulation protein NolJ">
    <location>
        <begin position="1"/>
        <end position="148"/>
    </location>
</feature>
<feature type="region of interest" description="Disordered" evidence="1">
    <location>
        <begin position="66"/>
        <end position="93"/>
    </location>
</feature>
<feature type="region of interest" description="Disordered" evidence="1">
    <location>
        <begin position="124"/>
        <end position="148"/>
    </location>
</feature>
<feature type="compositionally biased region" description="Acidic residues" evidence="1">
    <location>
        <begin position="66"/>
        <end position="78"/>
    </location>
</feature>
<feature type="compositionally biased region" description="Low complexity" evidence="1">
    <location>
        <begin position="124"/>
        <end position="136"/>
    </location>
</feature>
<dbReference type="EMBL" id="M19019">
    <property type="protein sequence ID" value="AAA26295.1"/>
    <property type="molecule type" value="Genomic_DNA"/>
</dbReference>
<dbReference type="EMBL" id="L26967">
    <property type="protein sequence ID" value="AAA26344.1"/>
    <property type="molecule type" value="Genomic_DNA"/>
</dbReference>
<dbReference type="PIR" id="B43663">
    <property type="entry name" value="B43663"/>
</dbReference>
<sequence length="148" mass="15791">MDIRLDSRRAIQAGPLVTTGRIAGAALRMARPFLGIARRLQFKAKAFELALRSVALQLMNDAMADADEAMEETEEDADALGGPRQEVRAVSDGTIVTEREMTCPQNRYCHECSWTGAAAGQNVAAKGAGAAVPGPNRRTGSGERRGYG</sequence>
<evidence type="ECO:0000256" key="1">
    <source>
        <dbReference type="SAM" id="MobiDB-lite"/>
    </source>
</evidence>
<name>NOLJ_RHIFR</name>
<protein>
    <recommendedName>
        <fullName>Nodulation protein NolJ</fullName>
    </recommendedName>
    <alternativeName>
        <fullName>Host-inducible protein B</fullName>
    </alternativeName>
</protein>
<keyword id="KW-0536">Nodulation</keyword>
<comment type="function">
    <text>Involved in efficiency of soybean nodulation and in nodulation delay.</text>
</comment>
<comment type="induction">
    <text>By plant 4',7-dihydroxy-isoflavone or derivatives.</text>
</comment>
<reference key="1">
    <citation type="journal article" date="1988" name="J. Bacteriol.">
        <title>Two host-inducible genes of Rhizobium fredii and characterization of the inducing compound.</title>
        <authorList>
            <person name="Sadowsky M.J."/>
            <person name="Olson E.R."/>
            <person name="Foster V.E."/>
            <person name="Kosslak R.M."/>
            <person name="Verma D.P.S."/>
        </authorList>
    </citation>
    <scope>NUCLEOTIDE SEQUENCE [GENOMIC DNA]</scope>
</reference>
<reference key="2">
    <citation type="journal article" date="1994" name="Mol. Plant Microbe Interact.">
        <title>Induction of the Rhizobium fredii nod box-independent nodulation gene nolJ requires a functional nodD1 gene.</title>
        <authorList>
            <person name="Boundy-Mills K.L."/>
            <person name="Kosslak R.M."/>
            <person name="Tully R.E."/>
            <person name="Pueppke S.G."/>
            <person name="Lohrke S.M."/>
            <person name="Sadowsky M.J."/>
        </authorList>
    </citation>
    <scope>NUCLEOTIDE SEQUENCE [GENOMIC DNA]</scope>
</reference>
<accession>P12780</accession>
<gene>
    <name type="primary">nolJ</name>
</gene>
<organism>
    <name type="scientific">Rhizobium fredii</name>
    <name type="common">Sinorhizobium fredii</name>
    <dbReference type="NCBI Taxonomy" id="380"/>
    <lineage>
        <taxon>Bacteria</taxon>
        <taxon>Pseudomonadati</taxon>
        <taxon>Pseudomonadota</taxon>
        <taxon>Alphaproteobacteria</taxon>
        <taxon>Hyphomicrobiales</taxon>
        <taxon>Rhizobiaceae</taxon>
        <taxon>Sinorhizobium/Ensifer group</taxon>
        <taxon>Sinorhizobium</taxon>
    </lineage>
</organism>
<proteinExistence type="evidence at transcript level"/>